<feature type="chain" id="PRO_0000159507" description="Cysteine--tRNA ligase">
    <location>
        <begin position="1"/>
        <end position="480"/>
    </location>
</feature>
<feature type="short sequence motif" description="'HIGH' region">
    <location>
        <begin position="31"/>
        <end position="41"/>
    </location>
</feature>
<feature type="short sequence motif" description="'KMSKS' region">
    <location>
        <begin position="276"/>
        <end position="280"/>
    </location>
</feature>
<feature type="binding site" evidence="1">
    <location>
        <position position="29"/>
    </location>
    <ligand>
        <name>Zn(2+)</name>
        <dbReference type="ChEBI" id="CHEBI:29105"/>
    </ligand>
</feature>
<feature type="binding site" evidence="1">
    <location>
        <position position="220"/>
    </location>
    <ligand>
        <name>Zn(2+)</name>
        <dbReference type="ChEBI" id="CHEBI:29105"/>
    </ligand>
</feature>
<feature type="binding site" evidence="1">
    <location>
        <position position="245"/>
    </location>
    <ligand>
        <name>Zn(2+)</name>
        <dbReference type="ChEBI" id="CHEBI:29105"/>
    </ligand>
</feature>
<feature type="binding site" evidence="1">
    <location>
        <position position="249"/>
    </location>
    <ligand>
        <name>Zn(2+)</name>
        <dbReference type="ChEBI" id="CHEBI:29105"/>
    </ligand>
</feature>
<feature type="binding site" evidence="1">
    <location>
        <position position="279"/>
    </location>
    <ligand>
        <name>ATP</name>
        <dbReference type="ChEBI" id="CHEBI:30616"/>
    </ligand>
</feature>
<proteinExistence type="inferred from homology"/>
<name>SYC_THET2</name>
<comment type="catalytic activity">
    <reaction evidence="1">
        <text>tRNA(Cys) + L-cysteine + ATP = L-cysteinyl-tRNA(Cys) + AMP + diphosphate</text>
        <dbReference type="Rhea" id="RHEA:17773"/>
        <dbReference type="Rhea" id="RHEA-COMP:9661"/>
        <dbReference type="Rhea" id="RHEA-COMP:9679"/>
        <dbReference type="ChEBI" id="CHEBI:30616"/>
        <dbReference type="ChEBI" id="CHEBI:33019"/>
        <dbReference type="ChEBI" id="CHEBI:35235"/>
        <dbReference type="ChEBI" id="CHEBI:78442"/>
        <dbReference type="ChEBI" id="CHEBI:78517"/>
        <dbReference type="ChEBI" id="CHEBI:456215"/>
        <dbReference type="EC" id="6.1.1.16"/>
    </reaction>
</comment>
<comment type="cofactor">
    <cofactor evidence="1">
        <name>Zn(2+)</name>
        <dbReference type="ChEBI" id="CHEBI:29105"/>
    </cofactor>
    <text evidence="1">Binds 1 zinc ion per subunit.</text>
</comment>
<comment type="subunit">
    <text evidence="1">Monomer.</text>
</comment>
<comment type="subcellular location">
    <subcellularLocation>
        <location evidence="1">Cytoplasm</location>
    </subcellularLocation>
</comment>
<comment type="similarity">
    <text evidence="1">Belongs to the class-I aminoacyl-tRNA synthetase family.</text>
</comment>
<accession>Q72KB0</accession>
<protein>
    <recommendedName>
        <fullName evidence="1">Cysteine--tRNA ligase</fullName>
        <ecNumber evidence="1">6.1.1.16</ecNumber>
    </recommendedName>
    <alternativeName>
        <fullName evidence="1">Cysteinyl-tRNA synthetase</fullName>
        <shortName evidence="1">CysRS</shortName>
    </alternativeName>
</protein>
<sequence>MGLVIYDTLARRKVPFEPAVPGHVGIYVCGPTVYSDPHLGHARGPVVYDILRRYFLHKGYKVRFVSNITDVGHLTDDADEGEDKIVRRAKLERLEPMEVADKYMWSYFDAMQALNVLRPSIAPRASGHIPEMLELTERLLARGHAYERKGSVYFRVRSFPEYGKLSGKRLEELRAGARVEVREEKEDPLDFALWKAAEPGHIMRWKSPWGEGYPGWHIECTAMSLKYLGEGFDLHAGGIDLQFPHHECEIAQAEAAGFRFARHWMHHNHVLLEGEKMAKSTGNLVLLHDLLEAHEPMALRFYLLQTHYRSPMDFTWEGLESAKRGYGRLLHAYREVRGRKKTAPPGTTPELERALDALEKAFMEAIEDDLSTPEALAALFAFLPELHKLLPEAKAESLARAEAVFHTLGEGILGLFPERVLEERVSGPLLEGLIALLLELREEARRAKDYEKSDLIRERLRALGVIVEDTKEGPRWRLER</sequence>
<dbReference type="EC" id="6.1.1.16" evidence="1"/>
<dbReference type="EMBL" id="AE017221">
    <property type="protein sequence ID" value="AAS80885.1"/>
    <property type="molecule type" value="Genomic_DNA"/>
</dbReference>
<dbReference type="RefSeq" id="WP_011172982.1">
    <property type="nucleotide sequence ID" value="NC_005835.1"/>
</dbReference>
<dbReference type="SMR" id="Q72KB0"/>
<dbReference type="KEGG" id="tth:TT_C0537"/>
<dbReference type="eggNOG" id="COG0215">
    <property type="taxonomic scope" value="Bacteria"/>
</dbReference>
<dbReference type="HOGENOM" id="CLU_013528_0_1_0"/>
<dbReference type="OrthoDB" id="9815130at2"/>
<dbReference type="Proteomes" id="UP000000592">
    <property type="component" value="Chromosome"/>
</dbReference>
<dbReference type="GO" id="GO:0005829">
    <property type="term" value="C:cytosol"/>
    <property type="evidence" value="ECO:0007669"/>
    <property type="project" value="TreeGrafter"/>
</dbReference>
<dbReference type="GO" id="GO:0005524">
    <property type="term" value="F:ATP binding"/>
    <property type="evidence" value="ECO:0007669"/>
    <property type="project" value="UniProtKB-UniRule"/>
</dbReference>
<dbReference type="GO" id="GO:0004817">
    <property type="term" value="F:cysteine-tRNA ligase activity"/>
    <property type="evidence" value="ECO:0007669"/>
    <property type="project" value="UniProtKB-UniRule"/>
</dbReference>
<dbReference type="GO" id="GO:0008270">
    <property type="term" value="F:zinc ion binding"/>
    <property type="evidence" value="ECO:0007669"/>
    <property type="project" value="UniProtKB-UniRule"/>
</dbReference>
<dbReference type="GO" id="GO:0006423">
    <property type="term" value="P:cysteinyl-tRNA aminoacylation"/>
    <property type="evidence" value="ECO:0007669"/>
    <property type="project" value="UniProtKB-UniRule"/>
</dbReference>
<dbReference type="CDD" id="cd00672">
    <property type="entry name" value="CysRS_core"/>
    <property type="match status" value="1"/>
</dbReference>
<dbReference type="Gene3D" id="1.20.120.1910">
    <property type="entry name" value="Cysteine-tRNA ligase, C-terminal anti-codon recognition domain"/>
    <property type="match status" value="1"/>
</dbReference>
<dbReference type="Gene3D" id="3.40.50.620">
    <property type="entry name" value="HUPs"/>
    <property type="match status" value="1"/>
</dbReference>
<dbReference type="HAMAP" id="MF_00041">
    <property type="entry name" value="Cys_tRNA_synth"/>
    <property type="match status" value="1"/>
</dbReference>
<dbReference type="InterPro" id="IPR015803">
    <property type="entry name" value="Cys-tRNA-ligase"/>
</dbReference>
<dbReference type="InterPro" id="IPR015273">
    <property type="entry name" value="Cys-tRNA-synt_Ia_DALR"/>
</dbReference>
<dbReference type="InterPro" id="IPR024909">
    <property type="entry name" value="Cys-tRNA/MSH_ligase"/>
</dbReference>
<dbReference type="InterPro" id="IPR056411">
    <property type="entry name" value="CysS_C"/>
</dbReference>
<dbReference type="InterPro" id="IPR014729">
    <property type="entry name" value="Rossmann-like_a/b/a_fold"/>
</dbReference>
<dbReference type="InterPro" id="IPR032678">
    <property type="entry name" value="tRNA-synt_1_cat_dom"/>
</dbReference>
<dbReference type="InterPro" id="IPR009080">
    <property type="entry name" value="tRNAsynth_Ia_anticodon-bd"/>
</dbReference>
<dbReference type="NCBIfam" id="TIGR00435">
    <property type="entry name" value="cysS"/>
    <property type="match status" value="1"/>
</dbReference>
<dbReference type="PANTHER" id="PTHR10890:SF3">
    <property type="entry name" value="CYSTEINE--TRNA LIGASE, CYTOPLASMIC"/>
    <property type="match status" value="1"/>
</dbReference>
<dbReference type="PANTHER" id="PTHR10890">
    <property type="entry name" value="CYSTEINYL-TRNA SYNTHETASE"/>
    <property type="match status" value="1"/>
</dbReference>
<dbReference type="Pfam" id="PF23493">
    <property type="entry name" value="CysS_C"/>
    <property type="match status" value="1"/>
</dbReference>
<dbReference type="Pfam" id="PF09190">
    <property type="entry name" value="DALR_2"/>
    <property type="match status" value="1"/>
</dbReference>
<dbReference type="Pfam" id="PF01406">
    <property type="entry name" value="tRNA-synt_1e"/>
    <property type="match status" value="1"/>
</dbReference>
<dbReference type="PRINTS" id="PR00983">
    <property type="entry name" value="TRNASYNTHCYS"/>
</dbReference>
<dbReference type="SMART" id="SM00840">
    <property type="entry name" value="DALR_2"/>
    <property type="match status" value="1"/>
</dbReference>
<dbReference type="SUPFAM" id="SSF47323">
    <property type="entry name" value="Anticodon-binding domain of a subclass of class I aminoacyl-tRNA synthetases"/>
    <property type="match status" value="1"/>
</dbReference>
<dbReference type="SUPFAM" id="SSF52374">
    <property type="entry name" value="Nucleotidylyl transferase"/>
    <property type="match status" value="1"/>
</dbReference>
<gene>
    <name evidence="1" type="primary">cysS</name>
    <name type="ordered locus">TT_C0537</name>
</gene>
<organism>
    <name type="scientific">Thermus thermophilus (strain ATCC BAA-163 / DSM 7039 / HB27)</name>
    <dbReference type="NCBI Taxonomy" id="262724"/>
    <lineage>
        <taxon>Bacteria</taxon>
        <taxon>Thermotogati</taxon>
        <taxon>Deinococcota</taxon>
        <taxon>Deinococci</taxon>
        <taxon>Thermales</taxon>
        <taxon>Thermaceae</taxon>
        <taxon>Thermus</taxon>
    </lineage>
</organism>
<reference key="1">
    <citation type="journal article" date="2004" name="Nat. Biotechnol.">
        <title>The genome sequence of the extreme thermophile Thermus thermophilus.</title>
        <authorList>
            <person name="Henne A."/>
            <person name="Brueggemann H."/>
            <person name="Raasch C."/>
            <person name="Wiezer A."/>
            <person name="Hartsch T."/>
            <person name="Liesegang H."/>
            <person name="Johann A."/>
            <person name="Lienard T."/>
            <person name="Gohl O."/>
            <person name="Martinez-Arias R."/>
            <person name="Jacobi C."/>
            <person name="Starkuviene V."/>
            <person name="Schlenczeck S."/>
            <person name="Dencker S."/>
            <person name="Huber R."/>
            <person name="Klenk H.-P."/>
            <person name="Kramer W."/>
            <person name="Merkl R."/>
            <person name="Gottschalk G."/>
            <person name="Fritz H.-J."/>
        </authorList>
    </citation>
    <scope>NUCLEOTIDE SEQUENCE [LARGE SCALE GENOMIC DNA]</scope>
    <source>
        <strain>ATCC BAA-163 / DSM 7039 / HB27</strain>
    </source>
</reference>
<keyword id="KW-0030">Aminoacyl-tRNA synthetase</keyword>
<keyword id="KW-0067">ATP-binding</keyword>
<keyword id="KW-0963">Cytoplasm</keyword>
<keyword id="KW-0436">Ligase</keyword>
<keyword id="KW-0479">Metal-binding</keyword>
<keyword id="KW-0547">Nucleotide-binding</keyword>
<keyword id="KW-0648">Protein biosynthesis</keyword>
<keyword id="KW-0862">Zinc</keyword>
<evidence type="ECO:0000255" key="1">
    <source>
        <dbReference type="HAMAP-Rule" id="MF_00041"/>
    </source>
</evidence>